<organism>
    <name type="scientific">Salmonella schwarzengrund (strain CVM19633)</name>
    <dbReference type="NCBI Taxonomy" id="439843"/>
    <lineage>
        <taxon>Bacteria</taxon>
        <taxon>Pseudomonadati</taxon>
        <taxon>Pseudomonadota</taxon>
        <taxon>Gammaproteobacteria</taxon>
        <taxon>Enterobacterales</taxon>
        <taxon>Enterobacteriaceae</taxon>
        <taxon>Salmonella</taxon>
    </lineage>
</organism>
<accession>B4TMG3</accession>
<reference key="1">
    <citation type="journal article" date="2011" name="J. Bacteriol.">
        <title>Comparative genomics of 28 Salmonella enterica isolates: evidence for CRISPR-mediated adaptive sublineage evolution.</title>
        <authorList>
            <person name="Fricke W.F."/>
            <person name="Mammel M.K."/>
            <person name="McDermott P.F."/>
            <person name="Tartera C."/>
            <person name="White D.G."/>
            <person name="Leclerc J.E."/>
            <person name="Ravel J."/>
            <person name="Cebula T.A."/>
        </authorList>
    </citation>
    <scope>NUCLEOTIDE SEQUENCE [LARGE SCALE GENOMIC DNA]</scope>
    <source>
        <strain>CVM19633</strain>
    </source>
</reference>
<keyword id="KW-0963">Cytoplasm</keyword>
<keyword id="KW-0238">DNA-binding</keyword>
<sequence>MFGKGGLGNLMKQAQQMQEKMQKMQEEIAQLEVTGESGAGLVKVTINGAHNCRRVEIDPSLLEDDKEMLEDLVAAAFNDAARRIEETQKEKMASVSSGMQLPPGFKMPF</sequence>
<protein>
    <recommendedName>
        <fullName evidence="1">Nucleoid-associated protein YbaB</fullName>
    </recommendedName>
</protein>
<evidence type="ECO:0000255" key="1">
    <source>
        <dbReference type="HAMAP-Rule" id="MF_00274"/>
    </source>
</evidence>
<feature type="chain" id="PRO_1000114647" description="Nucleoid-associated protein YbaB">
    <location>
        <begin position="1"/>
        <end position="109"/>
    </location>
</feature>
<proteinExistence type="inferred from homology"/>
<comment type="function">
    <text evidence="1">Binds to DNA and alters its conformation. May be involved in regulation of gene expression, nucleoid organization and DNA protection.</text>
</comment>
<comment type="subunit">
    <text evidence="1">Homodimer.</text>
</comment>
<comment type="subcellular location">
    <subcellularLocation>
        <location evidence="1">Cytoplasm</location>
        <location evidence="1">Nucleoid</location>
    </subcellularLocation>
</comment>
<comment type="similarity">
    <text evidence="1">Belongs to the YbaB/EbfC family.</text>
</comment>
<dbReference type="EMBL" id="CP001127">
    <property type="protein sequence ID" value="ACF90168.1"/>
    <property type="molecule type" value="Genomic_DNA"/>
</dbReference>
<dbReference type="RefSeq" id="WP_000467098.1">
    <property type="nucleotide sequence ID" value="NC_011094.1"/>
</dbReference>
<dbReference type="SMR" id="B4TMG3"/>
<dbReference type="KEGG" id="sew:SeSA_A0546"/>
<dbReference type="HOGENOM" id="CLU_140930_0_0_6"/>
<dbReference type="Proteomes" id="UP000001865">
    <property type="component" value="Chromosome"/>
</dbReference>
<dbReference type="GO" id="GO:0043590">
    <property type="term" value="C:bacterial nucleoid"/>
    <property type="evidence" value="ECO:0007669"/>
    <property type="project" value="UniProtKB-UniRule"/>
</dbReference>
<dbReference type="GO" id="GO:0005829">
    <property type="term" value="C:cytosol"/>
    <property type="evidence" value="ECO:0007669"/>
    <property type="project" value="TreeGrafter"/>
</dbReference>
<dbReference type="GO" id="GO:0003677">
    <property type="term" value="F:DNA binding"/>
    <property type="evidence" value="ECO:0007669"/>
    <property type="project" value="UniProtKB-UniRule"/>
</dbReference>
<dbReference type="FunFam" id="3.30.1310.10:FF:000001">
    <property type="entry name" value="Nucleoid-associated protein YbaB"/>
    <property type="match status" value="1"/>
</dbReference>
<dbReference type="Gene3D" id="3.30.1310.10">
    <property type="entry name" value="Nucleoid-associated protein YbaB-like domain"/>
    <property type="match status" value="1"/>
</dbReference>
<dbReference type="HAMAP" id="MF_00274">
    <property type="entry name" value="DNA_YbaB_EbfC"/>
    <property type="match status" value="1"/>
</dbReference>
<dbReference type="InterPro" id="IPR036894">
    <property type="entry name" value="YbaB-like_sf"/>
</dbReference>
<dbReference type="InterPro" id="IPR004401">
    <property type="entry name" value="YbaB/EbfC"/>
</dbReference>
<dbReference type="NCBIfam" id="TIGR00103">
    <property type="entry name" value="DNA_YbaB_EbfC"/>
    <property type="match status" value="1"/>
</dbReference>
<dbReference type="PANTHER" id="PTHR33449">
    <property type="entry name" value="NUCLEOID-ASSOCIATED PROTEIN YBAB"/>
    <property type="match status" value="1"/>
</dbReference>
<dbReference type="PANTHER" id="PTHR33449:SF1">
    <property type="entry name" value="NUCLEOID-ASSOCIATED PROTEIN YBAB"/>
    <property type="match status" value="1"/>
</dbReference>
<dbReference type="Pfam" id="PF02575">
    <property type="entry name" value="YbaB_DNA_bd"/>
    <property type="match status" value="1"/>
</dbReference>
<dbReference type="PIRSF" id="PIRSF004555">
    <property type="entry name" value="UCP004555"/>
    <property type="match status" value="1"/>
</dbReference>
<dbReference type="SUPFAM" id="SSF82607">
    <property type="entry name" value="YbaB-like"/>
    <property type="match status" value="1"/>
</dbReference>
<gene>
    <name evidence="1" type="primary">ybaB</name>
    <name type="ordered locus">SeSA_A0546</name>
</gene>
<name>YBAB_SALSV</name>